<evidence type="ECO:0000250" key="1"/>
<evidence type="ECO:0000305" key="2"/>
<name>PYP_RHOCB</name>
<accession>O69138</accession>
<accession>D5AR20</accession>
<protein>
    <recommendedName>
        <fullName>Photoactive yellow protein</fullName>
        <shortName>PYP</shortName>
    </recommendedName>
</protein>
<organism>
    <name type="scientific">Rhodobacter capsulatus (strain ATCC BAA-309 / NBRC 16581 / SB1003)</name>
    <dbReference type="NCBI Taxonomy" id="272942"/>
    <lineage>
        <taxon>Bacteria</taxon>
        <taxon>Pseudomonadati</taxon>
        <taxon>Pseudomonadota</taxon>
        <taxon>Alphaproteobacteria</taxon>
        <taxon>Rhodobacterales</taxon>
        <taxon>Rhodobacter group</taxon>
        <taxon>Rhodobacter</taxon>
    </lineage>
</organism>
<dbReference type="EMBL" id="AF064095">
    <property type="protein sequence ID" value="AAC17427.1"/>
    <property type="molecule type" value="Genomic_DNA"/>
</dbReference>
<dbReference type="EMBL" id="CP001312">
    <property type="protein sequence ID" value="ADE84826.1"/>
    <property type="molecule type" value="Genomic_DNA"/>
</dbReference>
<dbReference type="RefSeq" id="WP_013066805.1">
    <property type="nucleotide sequence ID" value="NC_014034.1"/>
</dbReference>
<dbReference type="SMR" id="O69138"/>
<dbReference type="STRING" id="272942.RCAP_rcc01066"/>
<dbReference type="GeneID" id="31489991"/>
<dbReference type="KEGG" id="rcp:RCAP_rcc01066"/>
<dbReference type="eggNOG" id="COG0840">
    <property type="taxonomic scope" value="Bacteria"/>
</dbReference>
<dbReference type="HOGENOM" id="CLU_142270_0_0_5"/>
<dbReference type="OrthoDB" id="329226at2"/>
<dbReference type="Proteomes" id="UP000002361">
    <property type="component" value="Chromosome"/>
</dbReference>
<dbReference type="GO" id="GO:0009881">
    <property type="term" value="F:photoreceptor activity"/>
    <property type="evidence" value="ECO:0007669"/>
    <property type="project" value="UniProtKB-KW"/>
</dbReference>
<dbReference type="GO" id="GO:0007602">
    <property type="term" value="P:phototransduction"/>
    <property type="evidence" value="ECO:0007669"/>
    <property type="project" value="InterPro"/>
</dbReference>
<dbReference type="GO" id="GO:0006355">
    <property type="term" value="P:regulation of DNA-templated transcription"/>
    <property type="evidence" value="ECO:0007669"/>
    <property type="project" value="InterPro"/>
</dbReference>
<dbReference type="Gene3D" id="3.30.450.20">
    <property type="entry name" value="PAS domain"/>
    <property type="match status" value="1"/>
</dbReference>
<dbReference type="InterPro" id="IPR035965">
    <property type="entry name" value="PAS-like_dom_sf"/>
</dbReference>
<dbReference type="InterPro" id="IPR013767">
    <property type="entry name" value="PAS_fold"/>
</dbReference>
<dbReference type="InterPro" id="IPR012130">
    <property type="entry name" value="PYP"/>
</dbReference>
<dbReference type="NCBIfam" id="TIGR02373">
    <property type="entry name" value="photo_yellow"/>
    <property type="match status" value="1"/>
</dbReference>
<dbReference type="Pfam" id="PF00989">
    <property type="entry name" value="PAS"/>
    <property type="match status" value="1"/>
</dbReference>
<dbReference type="PIRSF" id="PIRSF000087">
    <property type="entry name" value="PYP"/>
    <property type="match status" value="1"/>
</dbReference>
<dbReference type="SUPFAM" id="SSF55785">
    <property type="entry name" value="PYP-like sensor domain (PAS domain)"/>
    <property type="match status" value="1"/>
</dbReference>
<feature type="chain" id="PRO_0000144915" description="Photoactive yellow protein">
    <location>
        <begin position="1"/>
        <end position="124"/>
    </location>
</feature>
<feature type="domain" description="PAS">
    <location>
        <begin position="22"/>
        <end position="85"/>
    </location>
</feature>
<feature type="modified residue" description="S-(4-hydroxycinnamyl)cysteine" evidence="1">
    <location>
        <position position="68"/>
    </location>
</feature>
<comment type="function">
    <text evidence="1">This photoactive protein is a photoreceptor with kinetics similar to that of rhodopsin.</text>
</comment>
<comment type="PTM">
    <text evidence="1">The 4-hydroxycinnamic acid (p-coumaric acid) chromophore is covalently bound via a thioester linkage.</text>
</comment>
<comment type="similarity">
    <text evidence="2">Belongs to the photoactive yellow protein family.</text>
</comment>
<sequence>MEIIPFGTNDIDNILAREPARAESLPFGAVLLDRMGRIAKYNKAEGLIAGRDPSTVIGRDFFNEIAPCAKGKRFHGEFLKFNRTGQANVMLDYKFNYKGAEVAVKIHLKSQPDGQFCWLFVKRA</sequence>
<reference key="1">
    <citation type="submission" date="1998-05" db="EMBL/GenBank/DDBJ databases">
        <title>Genetic characterization of photoactive yellow protein from Rhodobacter capsulatus.</title>
        <authorList>
            <person name="Jiang Z."/>
            <person name="Bauer E.C."/>
        </authorList>
    </citation>
    <scope>NUCLEOTIDE SEQUENCE [GENOMIC DNA]</scope>
    <source>
        <strain>ATCC BAA-309 / NBRC 16581 / SB1003</strain>
    </source>
</reference>
<reference key="2">
    <citation type="journal article" date="2010" name="J. Bacteriol.">
        <title>Complete genome sequence of the photosynthetic purple nonsulfur bacterium Rhodobacter capsulatus SB 1003.</title>
        <authorList>
            <person name="Strnad H."/>
            <person name="Lapidus A."/>
            <person name="Paces J."/>
            <person name="Ulbrich P."/>
            <person name="Vlcek C."/>
            <person name="Paces V."/>
            <person name="Haselkorn R."/>
        </authorList>
    </citation>
    <scope>NUCLEOTIDE SEQUENCE [LARGE SCALE GENOMIC DNA]</scope>
    <source>
        <strain>ATCC BAA-309 / NBRC 16581 / SB1003</strain>
    </source>
</reference>
<proteinExistence type="inferred from homology"/>
<keyword id="KW-0157">Chromophore</keyword>
<keyword id="KW-0600">Photoreceptor protein</keyword>
<keyword id="KW-0675">Receptor</keyword>
<keyword id="KW-1185">Reference proteome</keyword>
<keyword id="KW-0716">Sensory transduction</keyword>
<gene>
    <name type="primary">pyp</name>
    <name type="ordered locus">RCAP_rcc01066</name>
</gene>